<reference key="1">
    <citation type="journal article" date="1998" name="Nature">
        <title>Deciphering the biology of Mycobacterium tuberculosis from the complete genome sequence.</title>
        <authorList>
            <person name="Cole S.T."/>
            <person name="Brosch R."/>
            <person name="Parkhill J."/>
            <person name="Garnier T."/>
            <person name="Churcher C.M."/>
            <person name="Harris D.E."/>
            <person name="Gordon S.V."/>
            <person name="Eiglmeier K."/>
            <person name="Gas S."/>
            <person name="Barry C.E. III"/>
            <person name="Tekaia F."/>
            <person name="Badcock K."/>
            <person name="Basham D."/>
            <person name="Brown D."/>
            <person name="Chillingworth T."/>
            <person name="Connor R."/>
            <person name="Davies R.M."/>
            <person name="Devlin K."/>
            <person name="Feltwell T."/>
            <person name="Gentles S."/>
            <person name="Hamlin N."/>
            <person name="Holroyd S."/>
            <person name="Hornsby T."/>
            <person name="Jagels K."/>
            <person name="Krogh A."/>
            <person name="McLean J."/>
            <person name="Moule S."/>
            <person name="Murphy L.D."/>
            <person name="Oliver S."/>
            <person name="Osborne J."/>
            <person name="Quail M.A."/>
            <person name="Rajandream M.A."/>
            <person name="Rogers J."/>
            <person name="Rutter S."/>
            <person name="Seeger K."/>
            <person name="Skelton S."/>
            <person name="Squares S."/>
            <person name="Squares R."/>
            <person name="Sulston J.E."/>
            <person name="Taylor K."/>
            <person name="Whitehead S."/>
            <person name="Barrell B.G."/>
        </authorList>
    </citation>
    <scope>NUCLEOTIDE SEQUENCE [LARGE SCALE GENOMIC DNA]</scope>
    <source>
        <strain>ATCC 25618 / H37Rv</strain>
    </source>
</reference>
<reference key="2">
    <citation type="journal article" date="2011" name="Mol. Cell. Proteomics">
        <title>Proteogenomic analysis of Mycobacterium tuberculosis by high resolution mass spectrometry.</title>
        <authorList>
            <person name="Kelkar D.S."/>
            <person name="Kumar D."/>
            <person name="Kumar P."/>
            <person name="Balakrishnan L."/>
            <person name="Muthusamy B."/>
            <person name="Yadav A.K."/>
            <person name="Shrivastava P."/>
            <person name="Marimuthu A."/>
            <person name="Anand S."/>
            <person name="Sundaram H."/>
            <person name="Kingsbury R."/>
            <person name="Harsha H.C."/>
            <person name="Nair B."/>
            <person name="Prasad T.S."/>
            <person name="Chauhan D.S."/>
            <person name="Katoch K."/>
            <person name="Katoch V.M."/>
            <person name="Kumar P."/>
            <person name="Chaerkady R."/>
            <person name="Ramachandran S."/>
            <person name="Dash D."/>
            <person name="Pandey A."/>
        </authorList>
    </citation>
    <scope>IDENTIFICATION BY MASS SPECTROMETRY [LARGE SCALE ANALYSIS]</scope>
    <source>
        <strain>ATCC 25618 / H37Rv</strain>
    </source>
</reference>
<gene>
    <name type="primary">cobK</name>
    <name type="ordered locus">Rv2070c</name>
    <name type="ORF">MTCY49.09c</name>
</gene>
<accession>P9WP89</accession>
<accession>L0TBE4</accession>
<accession>Q10680</accession>
<name>COBK_MYCTU</name>
<sequence length="244" mass="25737">MTRVLLLGGTAEGRALAKELHPHVEIVSSLAGRVPNPALPIGPVRIGGFGGVEGLRGWLREERIDAVVDATHPFAVTITAHAAQVCGELGLPYLVLARPPWDPGTAIIAVSDIEAADVVAEQGYSRVFLTTGRSGIAAFANSDAWFLIRVVTAPDGTALPRRHKLVLSRGPYGYHDEFALLREQRIDALVTKNSGGKMTRAKLDAAAALGISVVMIARPLLPAGVAAVDSVHRAAMWVAGLPSR</sequence>
<evidence type="ECO:0000250" key="1"/>
<evidence type="ECO:0000255" key="2">
    <source>
        <dbReference type="PROSITE-ProRule" id="PRU00356"/>
    </source>
</evidence>
<feature type="chain" id="PRO_0000135919" description="Precorrin-6A reductase">
    <location>
        <begin position="1"/>
        <end position="244"/>
    </location>
</feature>
<organism>
    <name type="scientific">Mycobacterium tuberculosis (strain ATCC 25618 / H37Rv)</name>
    <dbReference type="NCBI Taxonomy" id="83332"/>
    <lineage>
        <taxon>Bacteria</taxon>
        <taxon>Bacillati</taxon>
        <taxon>Actinomycetota</taxon>
        <taxon>Actinomycetes</taxon>
        <taxon>Mycobacteriales</taxon>
        <taxon>Mycobacteriaceae</taxon>
        <taxon>Mycobacterium</taxon>
        <taxon>Mycobacterium tuberculosis complex</taxon>
    </lineage>
</organism>
<dbReference type="EC" id="1.3.1.54"/>
<dbReference type="EMBL" id="AL123456">
    <property type="protein sequence ID" value="CCP44844.1"/>
    <property type="molecule type" value="Genomic_DNA"/>
</dbReference>
<dbReference type="PIR" id="A70765">
    <property type="entry name" value="A70765"/>
</dbReference>
<dbReference type="RefSeq" id="NP_216586.1">
    <property type="nucleotide sequence ID" value="NC_000962.3"/>
</dbReference>
<dbReference type="RefSeq" id="WP_003900455.1">
    <property type="nucleotide sequence ID" value="NZ_NVQJ01000047.1"/>
</dbReference>
<dbReference type="SMR" id="P9WP89"/>
<dbReference type="FunCoup" id="P9WP89">
    <property type="interactions" value="132"/>
</dbReference>
<dbReference type="STRING" id="83332.Rv2070c"/>
<dbReference type="PaxDb" id="83332-Rv2070c"/>
<dbReference type="DNASU" id="887566"/>
<dbReference type="GeneID" id="887566"/>
<dbReference type="KEGG" id="mtu:Rv2070c"/>
<dbReference type="KEGG" id="mtv:RVBD_2070c"/>
<dbReference type="TubercuList" id="Rv2070c"/>
<dbReference type="eggNOG" id="COG2099">
    <property type="taxonomic scope" value="Bacteria"/>
</dbReference>
<dbReference type="InParanoid" id="P9WP89"/>
<dbReference type="OrthoDB" id="5183775at2"/>
<dbReference type="PhylomeDB" id="P9WP89"/>
<dbReference type="UniPathway" id="UPA00148">
    <property type="reaction ID" value="UER00217"/>
</dbReference>
<dbReference type="Proteomes" id="UP000001584">
    <property type="component" value="Chromosome"/>
</dbReference>
<dbReference type="GO" id="GO:0016994">
    <property type="term" value="F:precorrin-6A reductase activity"/>
    <property type="evidence" value="ECO:0007669"/>
    <property type="project" value="UniProtKB-EC"/>
</dbReference>
<dbReference type="GO" id="GO:0009236">
    <property type="term" value="P:cobalamin biosynthetic process"/>
    <property type="evidence" value="ECO:0007669"/>
    <property type="project" value="UniProtKB-UniPathway"/>
</dbReference>
<dbReference type="InterPro" id="IPR003723">
    <property type="entry name" value="Precorrin-6x_reduct"/>
</dbReference>
<dbReference type="NCBIfam" id="TIGR00715">
    <property type="entry name" value="precor6x_red"/>
    <property type="match status" value="1"/>
</dbReference>
<dbReference type="NCBIfam" id="NF005968">
    <property type="entry name" value="PRK08057.1-2"/>
    <property type="match status" value="1"/>
</dbReference>
<dbReference type="PANTHER" id="PTHR36925">
    <property type="entry name" value="COBALT-PRECORRIN-6A REDUCTASE"/>
    <property type="match status" value="1"/>
</dbReference>
<dbReference type="PANTHER" id="PTHR36925:SF1">
    <property type="entry name" value="COBALT-PRECORRIN-6A REDUCTASE"/>
    <property type="match status" value="1"/>
</dbReference>
<dbReference type="Pfam" id="PF02571">
    <property type="entry name" value="CbiJ"/>
    <property type="match status" value="1"/>
</dbReference>
<dbReference type="PROSITE" id="PS51014">
    <property type="entry name" value="COBK_CBIJ"/>
    <property type="match status" value="1"/>
</dbReference>
<proteinExistence type="evidence at protein level"/>
<protein>
    <recommendedName>
        <fullName>Precorrin-6A reductase</fullName>
        <ecNumber>1.3.1.54</ecNumber>
    </recommendedName>
    <alternativeName>
        <fullName>Precorrin-6X reductase</fullName>
    </alternativeName>
</protein>
<comment type="function">
    <text evidence="1">Catalyzes the reduction of the macrocycle of precorrin-6X into precorrin-6Y.</text>
</comment>
<comment type="catalytic activity">
    <reaction>
        <text>precorrin-6B + NADP(+) = precorrin-6A + NADPH + 2 H(+)</text>
        <dbReference type="Rhea" id="RHEA:23408"/>
        <dbReference type="ChEBI" id="CHEBI:15378"/>
        <dbReference type="ChEBI" id="CHEBI:57783"/>
        <dbReference type="ChEBI" id="CHEBI:58349"/>
        <dbReference type="ChEBI" id="CHEBI:58532"/>
        <dbReference type="ChEBI" id="CHEBI:77872"/>
        <dbReference type="EC" id="1.3.1.54"/>
    </reaction>
</comment>
<comment type="pathway">
    <text>Cofactor biosynthesis; adenosylcobalamin biosynthesis; cob(II)yrinate a,c-diamide from precorrin-2 (aerobic route): step 6/10.</text>
</comment>
<comment type="similarity">
    <text evidence="2">Belongs to the precorrin-6x reductase family.</text>
</comment>
<keyword id="KW-0169">Cobalamin biosynthesis</keyword>
<keyword id="KW-0521">NADP</keyword>
<keyword id="KW-0560">Oxidoreductase</keyword>
<keyword id="KW-1185">Reference proteome</keyword>